<comment type="function">
    <text evidence="1">Plays a role in the nuclear pore complex (NPC) assembly and/or maintenance. Required for the assembly of peripheral proteins into the NPC. May anchor NUP62 to the NPC. Involved in nephrogenesis.</text>
</comment>
<comment type="subunit">
    <text evidence="1 2">Part of the nuclear pore complex (NPC). Forms part of the Nup160 subcomplex in the nuclear pore which is composed of NUP160, NUP133, NUP107 and Nup96; this complex plays a role in RNA export and in tethering Nup98 and NUP153 to the nucleus. Does not interact with TPR. Interacts with ZNF106.</text>
</comment>
<comment type="subcellular location">
    <subcellularLocation>
        <location evidence="1">Nucleus membrane</location>
    </subcellularLocation>
    <subcellularLocation>
        <location evidence="1">Nucleus</location>
        <location evidence="1">Nuclear pore complex</location>
    </subcellularLocation>
    <subcellularLocation>
        <location evidence="1">Chromosome</location>
        <location evidence="1">Centromere</location>
        <location evidence="1">Kinetochore</location>
    </subcellularLocation>
    <text evidence="1">Located on both the cytoplasmic and nuclear sides of the NPC core structure. During mitosis, localizes to the kinetochores. Dissociates from the dissasembled NPC structure late during prophase of mitosis.</text>
</comment>
<comment type="PTM">
    <text>The N-terminus is blocked.</text>
</comment>
<comment type="similarity">
    <text evidence="4">Belongs to the nucleoporin Nup84/Nup107 family.</text>
</comment>
<reference key="1">
    <citation type="journal article" date="1994" name="J. Biol. Chem.">
        <title>Nup107 is a novel nuclear pore complex protein that contains a leucine zipper.</title>
        <authorList>
            <person name="Radu A."/>
            <person name="Blobel G."/>
            <person name="Wozniak R.W."/>
        </authorList>
    </citation>
    <scope>NUCLEOTIDE SEQUENCE [MRNA]</scope>
    <scope>PARTIAL PROTEIN SEQUENCE</scope>
    <source>
        <strain>Buffalo</strain>
        <tissue>Liver</tissue>
    </source>
</reference>
<reference key="2">
    <citation type="journal article" date="2012" name="Nat. Commun.">
        <title>Quantitative maps of protein phosphorylation sites across 14 different rat organs and tissues.</title>
        <authorList>
            <person name="Lundby A."/>
            <person name="Secher A."/>
            <person name="Lage K."/>
            <person name="Nordsborg N.B."/>
            <person name="Dmytriyev A."/>
            <person name="Lundby C."/>
            <person name="Olsen J.V."/>
        </authorList>
    </citation>
    <scope>PHOSPHORYLATION [LARGE SCALE ANALYSIS] AT SER-11</scope>
    <scope>IDENTIFICATION BY MASS SPECTROMETRY [LARGE SCALE ANALYSIS]</scope>
</reference>
<proteinExistence type="evidence at protein level"/>
<name>NU107_RAT</name>
<protein>
    <recommendedName>
        <fullName>Nuclear pore complex protein Nup107</fullName>
    </recommendedName>
    <alternativeName>
        <fullName>107 kDa nucleoporin</fullName>
    </alternativeName>
    <alternativeName>
        <fullName>Nucleoporin Nup107</fullName>
    </alternativeName>
    <alternativeName>
        <fullName>p105</fullName>
    </alternativeName>
</protein>
<accession>P52590</accession>
<gene>
    <name type="primary">Nup107</name>
</gene>
<evidence type="ECO:0000250" key="1">
    <source>
        <dbReference type="UniProtKB" id="P57740"/>
    </source>
</evidence>
<evidence type="ECO:0000250" key="2">
    <source>
        <dbReference type="UniProtKB" id="Q8BH74"/>
    </source>
</evidence>
<evidence type="ECO:0000256" key="3">
    <source>
        <dbReference type="SAM" id="MobiDB-lite"/>
    </source>
</evidence>
<evidence type="ECO:0000305" key="4"/>
<evidence type="ECO:0007744" key="5">
    <source>
    </source>
</evidence>
<sequence>MDRSGFGGMSSPVIRDPEVTRTARKHSAHKRVLIQANQDENFGTTTPRSQIIPRTPSSFRQPFTPPSRSLLRHPDISYIFGTEGRSPRHIQSSGYLGNLSMVTNLDDSNWAAAFSSQRLGFYTNTEHHSMTEDINLSTVMLREDDPGEAASMSMFSDFLQSFLKHSSTTVFDLVEEYENICASQVNILSKIVSRATRWDWQKFSKTASMLWLLQQEMVTWRLLASLYRDRIQSSLEEENMFAIAGINASEKTVVEALFQRDSLVRQSQLVVDWLESIAKDEIGDFSDNIEFYAKSVYWENTLHSLKQRQLLSYIGSTRPLVTELDPDAPIRQKMPLDDLDREDEVRLLKYLFTLIRAGMTEEAQRLCKRCGQAWRAATLEGWKLHHDPNVNGGTELEPVEGNPYRRIWKISCWRMAEDELFNKYERAIYAALSGNLKQLLPVCDTWEDTVWAYFRVMVDSLVEQEIRTSVMTLDETEELPREYMEANWTLEKVFEELQATDKKRVLEENQEHYHVVQKFLILGDIDGLMDEFSKWLSKSRSSLPGHLLRFMTHLILFFRTLGLQTKEEVSIEVLKTYIQLLINEKHTNLIAFYTCHLPQDLAVAQYALFLEGVTECEQRHQCLELAKEADLDVATITKTVVENIRKKDNGEFSHHDLAPSLDTATTEEDRLKIDVIDWLVFDPAQRAEALRQGNAIMRKFLALKKHEAAKEVFVKIPQDSIAEIYNQWEEQGMESPLPAEDDNAIREHLCIRAYLEAHETFNERFKHMNSAPQKPTLLSQATFTEKVAHEHKEKKYEMDHNIWKGHLDALTADVKEKMYNVLLFVDGGWMVDVREDAEEDPERAHQMVLLRKLCLPMLCFLLHTILHSTGQYQECLQLADMVSSERHKLYLVFSKEELRKLLQKLRESSLMLLDQGLDPLGYEIQS</sequence>
<keyword id="KW-0007">Acetylation</keyword>
<keyword id="KW-0137">Centromere</keyword>
<keyword id="KW-0158">Chromosome</keyword>
<keyword id="KW-0903">Direct protein sequencing</keyword>
<keyword id="KW-0995">Kinetochore</keyword>
<keyword id="KW-0472">Membrane</keyword>
<keyword id="KW-0488">Methylation</keyword>
<keyword id="KW-0509">mRNA transport</keyword>
<keyword id="KW-0906">Nuclear pore complex</keyword>
<keyword id="KW-0539">Nucleus</keyword>
<keyword id="KW-0597">Phosphoprotein</keyword>
<keyword id="KW-0653">Protein transport</keyword>
<keyword id="KW-1185">Reference proteome</keyword>
<keyword id="KW-0811">Translocation</keyword>
<keyword id="KW-0813">Transport</keyword>
<dbReference type="EMBL" id="L31840">
    <property type="protein sequence ID" value="AAA74476.1"/>
    <property type="molecule type" value="mRNA"/>
</dbReference>
<dbReference type="PIR" id="A54142">
    <property type="entry name" value="A54142"/>
</dbReference>
<dbReference type="SMR" id="P52590"/>
<dbReference type="CORUM" id="P52590"/>
<dbReference type="FunCoup" id="P52590">
    <property type="interactions" value="3283"/>
</dbReference>
<dbReference type="STRING" id="10116.ENSRNOP00000009203"/>
<dbReference type="iPTMnet" id="P52590"/>
<dbReference type="PhosphoSitePlus" id="P52590"/>
<dbReference type="jPOST" id="P52590"/>
<dbReference type="PaxDb" id="10116-ENSRNOP00000009203"/>
<dbReference type="PeptideAtlas" id="P52590"/>
<dbReference type="AGR" id="RGD:621160"/>
<dbReference type="RGD" id="621160">
    <property type="gene designation" value="Nup107"/>
</dbReference>
<dbReference type="eggNOG" id="KOG1964">
    <property type="taxonomic scope" value="Eukaryota"/>
</dbReference>
<dbReference type="InParanoid" id="P52590"/>
<dbReference type="PhylomeDB" id="P52590"/>
<dbReference type="Reactome" id="R-RNO-141444">
    <property type="pathway name" value="Amplification of signal from unattached kinetochores via a MAD2 inhibitory signal"/>
</dbReference>
<dbReference type="Reactome" id="R-RNO-159227">
    <property type="pathway name" value="Transport of the SLBP independent Mature mRNA"/>
</dbReference>
<dbReference type="Reactome" id="R-RNO-159230">
    <property type="pathway name" value="Transport of the SLBP Dependant Mature mRNA"/>
</dbReference>
<dbReference type="Reactome" id="R-RNO-159231">
    <property type="pathway name" value="Transport of Mature mRNA Derived from an Intronless Transcript"/>
</dbReference>
<dbReference type="Reactome" id="R-RNO-159236">
    <property type="pathway name" value="Transport of Mature mRNA derived from an Intron-Containing Transcript"/>
</dbReference>
<dbReference type="Reactome" id="R-RNO-170822">
    <property type="pathway name" value="Regulation of Glucokinase by Glucokinase Regulatory Protein"/>
</dbReference>
<dbReference type="Reactome" id="R-RNO-191859">
    <property type="pathway name" value="snRNP Assembly"/>
</dbReference>
<dbReference type="Reactome" id="R-RNO-2467813">
    <property type="pathway name" value="Separation of Sister Chromatids"/>
</dbReference>
<dbReference type="Reactome" id="R-RNO-2500257">
    <property type="pathway name" value="Resolution of Sister Chromatid Cohesion"/>
</dbReference>
<dbReference type="Reactome" id="R-RNO-3108214">
    <property type="pathway name" value="SUMOylation of DNA damage response and repair proteins"/>
</dbReference>
<dbReference type="Reactome" id="R-RNO-3232142">
    <property type="pathway name" value="SUMOylation of ubiquitinylation proteins"/>
</dbReference>
<dbReference type="Reactome" id="R-RNO-3301854">
    <property type="pathway name" value="Nuclear Pore Complex (NPC) Disassembly"/>
</dbReference>
<dbReference type="Reactome" id="R-RNO-3371453">
    <property type="pathway name" value="Regulation of HSF1-mediated heat shock response"/>
</dbReference>
<dbReference type="Reactome" id="R-RNO-4085377">
    <property type="pathway name" value="SUMOylation of SUMOylation proteins"/>
</dbReference>
<dbReference type="Reactome" id="R-RNO-4551638">
    <property type="pathway name" value="SUMOylation of chromatin organization proteins"/>
</dbReference>
<dbReference type="Reactome" id="R-RNO-4570464">
    <property type="pathway name" value="SUMOylation of RNA binding proteins"/>
</dbReference>
<dbReference type="Reactome" id="R-RNO-4615885">
    <property type="pathway name" value="SUMOylation of DNA replication proteins"/>
</dbReference>
<dbReference type="Reactome" id="R-RNO-5578749">
    <property type="pathway name" value="Transcriptional regulation by small RNAs"/>
</dbReference>
<dbReference type="Reactome" id="R-RNO-5663220">
    <property type="pathway name" value="RHO GTPases Activate Formins"/>
</dbReference>
<dbReference type="Reactome" id="R-RNO-68877">
    <property type="pathway name" value="Mitotic Prometaphase"/>
</dbReference>
<dbReference type="Reactome" id="R-RNO-9615933">
    <property type="pathway name" value="Postmitotic nuclear pore complex (NPC) reformation"/>
</dbReference>
<dbReference type="Reactome" id="R-RNO-9648025">
    <property type="pathway name" value="EML4 and NUDC in mitotic spindle formation"/>
</dbReference>
<dbReference type="PRO" id="PR:P52590"/>
<dbReference type="Proteomes" id="UP000002494">
    <property type="component" value="Unplaced"/>
</dbReference>
<dbReference type="GO" id="GO:0000776">
    <property type="term" value="C:kinetochore"/>
    <property type="evidence" value="ECO:0000266"/>
    <property type="project" value="RGD"/>
</dbReference>
<dbReference type="GO" id="GO:0005635">
    <property type="term" value="C:nuclear envelope"/>
    <property type="evidence" value="ECO:0000266"/>
    <property type="project" value="RGD"/>
</dbReference>
<dbReference type="GO" id="GO:0031965">
    <property type="term" value="C:nuclear membrane"/>
    <property type="evidence" value="ECO:0000314"/>
    <property type="project" value="RGD"/>
</dbReference>
<dbReference type="GO" id="GO:0034399">
    <property type="term" value="C:nuclear periphery"/>
    <property type="evidence" value="ECO:0000250"/>
    <property type="project" value="UniProtKB"/>
</dbReference>
<dbReference type="GO" id="GO:0005643">
    <property type="term" value="C:nuclear pore"/>
    <property type="evidence" value="ECO:0000314"/>
    <property type="project" value="RGD"/>
</dbReference>
<dbReference type="GO" id="GO:0031080">
    <property type="term" value="C:nuclear pore outer ring"/>
    <property type="evidence" value="ECO:0000250"/>
    <property type="project" value="UniProtKB"/>
</dbReference>
<dbReference type="GO" id="GO:0017056">
    <property type="term" value="F:structural constituent of nuclear pore"/>
    <property type="evidence" value="ECO:0000250"/>
    <property type="project" value="UniProtKB"/>
</dbReference>
<dbReference type="GO" id="GO:0008585">
    <property type="term" value="P:female gonad development"/>
    <property type="evidence" value="ECO:0000266"/>
    <property type="project" value="RGD"/>
</dbReference>
<dbReference type="GO" id="GO:0006406">
    <property type="term" value="P:mRNA export from nucleus"/>
    <property type="evidence" value="ECO:0000250"/>
    <property type="project" value="UniProtKB"/>
</dbReference>
<dbReference type="GO" id="GO:0072006">
    <property type="term" value="P:nephron development"/>
    <property type="evidence" value="ECO:0000250"/>
    <property type="project" value="UniProtKB"/>
</dbReference>
<dbReference type="GO" id="GO:0051292">
    <property type="term" value="P:nuclear pore complex assembly"/>
    <property type="evidence" value="ECO:0000250"/>
    <property type="project" value="UniProtKB"/>
</dbReference>
<dbReference type="GO" id="GO:0000973">
    <property type="term" value="P:post-transcriptional tethering of RNA polymerase II gene DNA at nuclear periphery"/>
    <property type="evidence" value="ECO:0000318"/>
    <property type="project" value="GO_Central"/>
</dbReference>
<dbReference type="GO" id="GO:0006606">
    <property type="term" value="P:protein import into nucleus"/>
    <property type="evidence" value="ECO:0000318"/>
    <property type="project" value="GO_Central"/>
</dbReference>
<dbReference type="FunFam" id="1.10.3450.20:FF:000001">
    <property type="entry name" value="Nuclear pore complex protein"/>
    <property type="match status" value="1"/>
</dbReference>
<dbReference type="FunFam" id="1.20.190.50:FF:000001">
    <property type="entry name" value="Nuclear pore complex protein"/>
    <property type="match status" value="1"/>
</dbReference>
<dbReference type="Gene3D" id="1.10.3450.20">
    <property type="match status" value="1"/>
</dbReference>
<dbReference type="Gene3D" id="1.20.190.50">
    <property type="match status" value="1"/>
</dbReference>
<dbReference type="InterPro" id="IPR007252">
    <property type="entry name" value="Nup84/Nup107"/>
</dbReference>
<dbReference type="PANTHER" id="PTHR13003:SF2">
    <property type="entry name" value="NUCLEAR PORE COMPLEX PROTEIN NUP107"/>
    <property type="match status" value="1"/>
</dbReference>
<dbReference type="PANTHER" id="PTHR13003">
    <property type="entry name" value="NUP107-RELATED"/>
    <property type="match status" value="1"/>
</dbReference>
<dbReference type="Pfam" id="PF04121">
    <property type="entry name" value="Nup84_Nup100"/>
    <property type="match status" value="1"/>
</dbReference>
<organism>
    <name type="scientific">Rattus norvegicus</name>
    <name type="common">Rat</name>
    <dbReference type="NCBI Taxonomy" id="10116"/>
    <lineage>
        <taxon>Eukaryota</taxon>
        <taxon>Metazoa</taxon>
        <taxon>Chordata</taxon>
        <taxon>Craniata</taxon>
        <taxon>Vertebrata</taxon>
        <taxon>Euteleostomi</taxon>
        <taxon>Mammalia</taxon>
        <taxon>Eutheria</taxon>
        <taxon>Euarchontoglires</taxon>
        <taxon>Glires</taxon>
        <taxon>Rodentia</taxon>
        <taxon>Myomorpha</taxon>
        <taxon>Muroidea</taxon>
        <taxon>Muridae</taxon>
        <taxon>Murinae</taxon>
        <taxon>Rattus</taxon>
    </lineage>
</organism>
<feature type="chain" id="PRO_0000204833" description="Nuclear pore complex protein Nup107">
    <location>
        <begin position="1"/>
        <end position="926"/>
    </location>
</feature>
<feature type="region of interest" description="Disordered" evidence="3">
    <location>
        <begin position="1"/>
        <end position="66"/>
    </location>
</feature>
<feature type="compositionally biased region" description="Basic residues" evidence="3">
    <location>
        <begin position="22"/>
        <end position="32"/>
    </location>
</feature>
<feature type="compositionally biased region" description="Polar residues" evidence="3">
    <location>
        <begin position="35"/>
        <end position="49"/>
    </location>
</feature>
<feature type="modified residue" description="N-acetylmethionine" evidence="1">
    <location>
        <position position="1"/>
    </location>
</feature>
<feature type="modified residue" description="Phosphoserine" evidence="1">
    <location>
        <position position="4"/>
    </location>
</feature>
<feature type="modified residue" description="Phosphoserine" evidence="1">
    <location>
        <position position="10"/>
    </location>
</feature>
<feature type="modified residue" description="Phosphoserine" evidence="5">
    <location>
        <position position="11"/>
    </location>
</feature>
<feature type="modified residue" description="Phosphothreonine" evidence="1">
    <location>
        <position position="46"/>
    </location>
</feature>
<feature type="modified residue" description="Phosphothreonine" evidence="1">
    <location>
        <position position="55"/>
    </location>
</feature>
<feature type="modified residue" description="Phosphoserine" evidence="1">
    <location>
        <position position="57"/>
    </location>
</feature>
<feature type="modified residue" description="Phosphoserine" evidence="1">
    <location>
        <position position="58"/>
    </location>
</feature>
<feature type="modified residue" description="Asymmetric dimethylarginine; alternate" evidence="2">
    <location>
        <position position="60"/>
    </location>
</feature>
<feature type="modified residue" description="Omega-N-methylarginine; alternate" evidence="1">
    <location>
        <position position="60"/>
    </location>
</feature>
<feature type="modified residue" description="Phosphothreonine" evidence="1">
    <location>
        <position position="64"/>
    </location>
</feature>
<feature type="modified residue" description="Omega-N-methylarginine" evidence="2">
    <location>
        <position position="68"/>
    </location>
</feature>
<feature type="modified residue" description="Phosphoserine" evidence="1">
    <location>
        <position position="69"/>
    </location>
</feature>
<feature type="modified residue" description="Phosphoserine" evidence="1">
    <location>
        <position position="86"/>
    </location>
</feature>